<gene>
    <name evidence="2" type="primary">rpsL</name>
    <name type="ordered locus">SSP2210</name>
</gene>
<name>RS12_STAS1</name>
<protein>
    <recommendedName>
        <fullName evidence="2">Small ribosomal subunit protein uS12</fullName>
    </recommendedName>
    <alternativeName>
        <fullName evidence="4">30S ribosomal protein S12</fullName>
    </alternativeName>
</protein>
<accession>Q49V55</accession>
<feature type="chain" id="PRO_0000226417" description="Small ribosomal subunit protein uS12">
    <location>
        <begin position="1"/>
        <end position="137"/>
    </location>
</feature>
<feature type="region of interest" description="Disordered" evidence="3">
    <location>
        <begin position="1"/>
        <end position="55"/>
    </location>
</feature>
<feature type="region of interest" description="Disordered" evidence="3">
    <location>
        <begin position="118"/>
        <end position="137"/>
    </location>
</feature>
<feature type="modified residue" description="3-methylthioaspartic acid" evidence="1">
    <location>
        <position position="102"/>
    </location>
</feature>
<keyword id="KW-0488">Methylation</keyword>
<keyword id="KW-1185">Reference proteome</keyword>
<keyword id="KW-0687">Ribonucleoprotein</keyword>
<keyword id="KW-0689">Ribosomal protein</keyword>
<keyword id="KW-0694">RNA-binding</keyword>
<keyword id="KW-0699">rRNA-binding</keyword>
<keyword id="KW-0820">tRNA-binding</keyword>
<dbReference type="EMBL" id="AP008934">
    <property type="protein sequence ID" value="BAE19355.1"/>
    <property type="molecule type" value="Genomic_DNA"/>
</dbReference>
<dbReference type="RefSeq" id="WP_002484156.1">
    <property type="nucleotide sequence ID" value="NZ_MTGA01000039.1"/>
</dbReference>
<dbReference type="SMR" id="Q49V55"/>
<dbReference type="GeneID" id="97229007"/>
<dbReference type="KEGG" id="ssp:SSP2210"/>
<dbReference type="eggNOG" id="COG0048">
    <property type="taxonomic scope" value="Bacteria"/>
</dbReference>
<dbReference type="HOGENOM" id="CLU_104295_1_2_9"/>
<dbReference type="OrthoDB" id="9802366at2"/>
<dbReference type="Proteomes" id="UP000006371">
    <property type="component" value="Chromosome"/>
</dbReference>
<dbReference type="GO" id="GO:0015935">
    <property type="term" value="C:small ribosomal subunit"/>
    <property type="evidence" value="ECO:0007669"/>
    <property type="project" value="InterPro"/>
</dbReference>
<dbReference type="GO" id="GO:0019843">
    <property type="term" value="F:rRNA binding"/>
    <property type="evidence" value="ECO:0007669"/>
    <property type="project" value="UniProtKB-UniRule"/>
</dbReference>
<dbReference type="GO" id="GO:0003735">
    <property type="term" value="F:structural constituent of ribosome"/>
    <property type="evidence" value="ECO:0007669"/>
    <property type="project" value="InterPro"/>
</dbReference>
<dbReference type="GO" id="GO:0000049">
    <property type="term" value="F:tRNA binding"/>
    <property type="evidence" value="ECO:0007669"/>
    <property type="project" value="UniProtKB-UniRule"/>
</dbReference>
<dbReference type="GO" id="GO:0006412">
    <property type="term" value="P:translation"/>
    <property type="evidence" value="ECO:0007669"/>
    <property type="project" value="UniProtKB-UniRule"/>
</dbReference>
<dbReference type="CDD" id="cd03368">
    <property type="entry name" value="Ribosomal_S12"/>
    <property type="match status" value="1"/>
</dbReference>
<dbReference type="FunFam" id="2.40.50.140:FF:000001">
    <property type="entry name" value="30S ribosomal protein S12"/>
    <property type="match status" value="1"/>
</dbReference>
<dbReference type="Gene3D" id="2.40.50.140">
    <property type="entry name" value="Nucleic acid-binding proteins"/>
    <property type="match status" value="1"/>
</dbReference>
<dbReference type="HAMAP" id="MF_00403_B">
    <property type="entry name" value="Ribosomal_uS12_B"/>
    <property type="match status" value="1"/>
</dbReference>
<dbReference type="InterPro" id="IPR012340">
    <property type="entry name" value="NA-bd_OB-fold"/>
</dbReference>
<dbReference type="InterPro" id="IPR006032">
    <property type="entry name" value="Ribosomal_uS12"/>
</dbReference>
<dbReference type="InterPro" id="IPR005679">
    <property type="entry name" value="Ribosomal_uS12_bac"/>
</dbReference>
<dbReference type="NCBIfam" id="TIGR00981">
    <property type="entry name" value="rpsL_bact"/>
    <property type="match status" value="1"/>
</dbReference>
<dbReference type="PANTHER" id="PTHR11652">
    <property type="entry name" value="30S RIBOSOMAL PROTEIN S12 FAMILY MEMBER"/>
    <property type="match status" value="1"/>
</dbReference>
<dbReference type="Pfam" id="PF00164">
    <property type="entry name" value="Ribosom_S12_S23"/>
    <property type="match status" value="1"/>
</dbReference>
<dbReference type="PIRSF" id="PIRSF002133">
    <property type="entry name" value="Ribosomal_S12/S23"/>
    <property type="match status" value="1"/>
</dbReference>
<dbReference type="PRINTS" id="PR01034">
    <property type="entry name" value="RIBOSOMALS12"/>
</dbReference>
<dbReference type="SUPFAM" id="SSF50249">
    <property type="entry name" value="Nucleic acid-binding proteins"/>
    <property type="match status" value="1"/>
</dbReference>
<dbReference type="PROSITE" id="PS00055">
    <property type="entry name" value="RIBOSOMAL_S12"/>
    <property type="match status" value="1"/>
</dbReference>
<evidence type="ECO:0000250" key="1"/>
<evidence type="ECO:0000255" key="2">
    <source>
        <dbReference type="HAMAP-Rule" id="MF_00403"/>
    </source>
</evidence>
<evidence type="ECO:0000256" key="3">
    <source>
        <dbReference type="SAM" id="MobiDB-lite"/>
    </source>
</evidence>
<evidence type="ECO:0000305" key="4"/>
<reference key="1">
    <citation type="journal article" date="2005" name="Proc. Natl. Acad. Sci. U.S.A.">
        <title>Whole genome sequence of Staphylococcus saprophyticus reveals the pathogenesis of uncomplicated urinary tract infection.</title>
        <authorList>
            <person name="Kuroda M."/>
            <person name="Yamashita A."/>
            <person name="Hirakawa H."/>
            <person name="Kumano M."/>
            <person name="Morikawa K."/>
            <person name="Higashide M."/>
            <person name="Maruyama A."/>
            <person name="Inose Y."/>
            <person name="Matoba K."/>
            <person name="Toh H."/>
            <person name="Kuhara S."/>
            <person name="Hattori M."/>
            <person name="Ohta T."/>
        </authorList>
    </citation>
    <scope>NUCLEOTIDE SEQUENCE [LARGE SCALE GENOMIC DNA]</scope>
    <source>
        <strain>ATCC 15305 / DSM 20229 / NCIMB 8711 / NCTC 7292 / S-41</strain>
    </source>
</reference>
<sequence length="137" mass="15360">MPTINQLVRKPRQSKSKKSDSPALNRNFNSKKKKFTDLNSPQKRGVCTRVGTMTPKKPNSALRKYARVRLSNNIEINAYIPGIGHNLQEHSVVLVRGGRVKDLPGVRYHIVRGALDTSGVDGRRQGRSLYGTKKPKK</sequence>
<comment type="function">
    <text evidence="2">With S4 and S5 plays an important role in translational accuracy.</text>
</comment>
<comment type="function">
    <text evidence="2">Interacts with and stabilizes bases of the 16S rRNA that are involved in tRNA selection in the A site and with the mRNA backbone. Located at the interface of the 30S and 50S subunits, it traverses the body of the 30S subunit contacting proteins on the other side and probably holding the rRNA structure together. The combined cluster of proteins S8, S12 and S17 appears to hold together the shoulder and platform of the 30S subunit.</text>
</comment>
<comment type="subunit">
    <text evidence="2">Part of the 30S ribosomal subunit. Contacts proteins S8 and S17. May interact with IF1 in the 30S initiation complex.</text>
</comment>
<comment type="similarity">
    <text evidence="2">Belongs to the universal ribosomal protein uS12 family.</text>
</comment>
<proteinExistence type="inferred from homology"/>
<organism>
    <name type="scientific">Staphylococcus saprophyticus subsp. saprophyticus (strain ATCC 15305 / DSM 20229 / NCIMB 8711 / NCTC 7292 / S-41)</name>
    <dbReference type="NCBI Taxonomy" id="342451"/>
    <lineage>
        <taxon>Bacteria</taxon>
        <taxon>Bacillati</taxon>
        <taxon>Bacillota</taxon>
        <taxon>Bacilli</taxon>
        <taxon>Bacillales</taxon>
        <taxon>Staphylococcaceae</taxon>
        <taxon>Staphylococcus</taxon>
    </lineage>
</organism>